<gene>
    <name evidence="1" type="primary">ftsH</name>
    <name type="ordered locus">HP_1069</name>
</gene>
<keyword id="KW-0002">3D-structure</keyword>
<keyword id="KW-0067">ATP-binding</keyword>
<keyword id="KW-0997">Cell inner membrane</keyword>
<keyword id="KW-1003">Cell membrane</keyword>
<keyword id="KW-0378">Hydrolase</keyword>
<keyword id="KW-0472">Membrane</keyword>
<keyword id="KW-0479">Metal-binding</keyword>
<keyword id="KW-0482">Metalloprotease</keyword>
<keyword id="KW-0547">Nucleotide-binding</keyword>
<keyword id="KW-0645">Protease</keyword>
<keyword id="KW-1185">Reference proteome</keyword>
<keyword id="KW-0812">Transmembrane</keyword>
<keyword id="KW-1133">Transmembrane helix</keyword>
<keyword id="KW-0862">Zinc</keyword>
<evidence type="ECO:0000255" key="1">
    <source>
        <dbReference type="HAMAP-Rule" id="MF_01458"/>
    </source>
</evidence>
<evidence type="ECO:0000269" key="2">
    <source>
    </source>
</evidence>
<evidence type="ECO:0000305" key="3"/>
<evidence type="ECO:0000305" key="4">
    <source>
    </source>
</evidence>
<evidence type="ECO:0007829" key="5">
    <source>
        <dbReference type="PDB" id="2R62"/>
    </source>
</evidence>
<evidence type="ECO:0007829" key="6">
    <source>
        <dbReference type="PDB" id="2R65"/>
    </source>
</evidence>
<accession>P71408</accession>
<accession>O07679</accession>
<accession>Q48268</accession>
<name>FTSH_HELPY</name>
<reference key="1">
    <citation type="journal article" date="1996" name="J. Bacteriol.">
        <title>Sequencing, expression, and genetic characterization of the Helicobacter pylori ftsH gene encoding a protein homologous to members of a novel putative ATPase family.</title>
        <authorList>
            <person name="Ge Z."/>
            <person name="Taylor D.E."/>
        </authorList>
    </citation>
    <scope>NUCLEOTIDE SEQUENCE [GENOMIC DNA]</scope>
    <scope>SUBCELLULAR LOCATION</scope>
    <scope>DISRUPTION PHENOTYPE</scope>
    <source>
        <strain>ATCC 43629 / JCM 7656 / NCTC 11639 / UA802</strain>
    </source>
</reference>
<reference key="2">
    <citation type="journal article" date="1997" name="J. Bacteriol.">
        <title>Identification and characterization of an operon of Helicobacter pylori that is involved in motility and stress adaptation.</title>
        <authorList>
            <person name="Beier D."/>
            <person name="Spohn G."/>
            <person name="Rappuoli R."/>
            <person name="Scarlato V."/>
        </authorList>
    </citation>
    <scope>NUCLEOTIDE SEQUENCE [GENOMIC DNA]</scope>
    <source>
        <strain>DSM 4867 / CCUG 17874 / NCTC 11638</strain>
    </source>
</reference>
<reference key="3">
    <citation type="journal article" date="1997" name="Nature">
        <title>The complete genome sequence of the gastric pathogen Helicobacter pylori.</title>
        <authorList>
            <person name="Tomb J.-F."/>
            <person name="White O."/>
            <person name="Kerlavage A.R."/>
            <person name="Clayton R.A."/>
            <person name="Sutton G.G."/>
            <person name="Fleischmann R.D."/>
            <person name="Ketchum K.A."/>
            <person name="Klenk H.-P."/>
            <person name="Gill S.R."/>
            <person name="Dougherty B.A."/>
            <person name="Nelson K.E."/>
            <person name="Quackenbush J."/>
            <person name="Zhou L."/>
            <person name="Kirkness E.F."/>
            <person name="Peterson S.N."/>
            <person name="Loftus B.J."/>
            <person name="Richardson D.L."/>
            <person name="Dodson R.J."/>
            <person name="Khalak H.G."/>
            <person name="Glodek A."/>
            <person name="McKenney K."/>
            <person name="FitzGerald L.M."/>
            <person name="Lee N."/>
            <person name="Adams M.D."/>
            <person name="Hickey E.K."/>
            <person name="Berg D.E."/>
            <person name="Gocayne J.D."/>
            <person name="Utterback T.R."/>
            <person name="Peterson J.D."/>
            <person name="Kelley J.M."/>
            <person name="Cotton M.D."/>
            <person name="Weidman J.F."/>
            <person name="Fujii C."/>
            <person name="Bowman C."/>
            <person name="Watthey L."/>
            <person name="Wallin E."/>
            <person name="Hayes W.S."/>
            <person name="Borodovsky M."/>
            <person name="Karp P.D."/>
            <person name="Smith H.O."/>
            <person name="Fraser C.M."/>
            <person name="Venter J.C."/>
        </authorList>
    </citation>
    <scope>NUCLEOTIDE SEQUENCE [LARGE SCALE GENOMIC DNA]</scope>
    <source>
        <strain>ATCC 700392 / 26695</strain>
    </source>
</reference>
<reference key="4">
    <citation type="journal article" date="1996" name="J. Biol. Chem.">
        <title>Cloning and membrane topology of a P type ATPase from Helicobacter pylori.</title>
        <authorList>
            <person name="Melchers K."/>
            <person name="Weitzenegger T."/>
            <person name="Buhmann A."/>
            <person name="Steinhilber W."/>
            <person name="Sachs G."/>
            <person name="Schaefer K.P."/>
        </authorList>
    </citation>
    <scope>NUCLEOTIDE SEQUENCE [GENOMIC DNA] OF 324-632</scope>
    <source>
        <strain>69A</strain>
    </source>
</reference>
<reference key="5">
    <citation type="journal article" date="2008" name="J. Synchrotron Radiat.">
        <title>Structural studies on Helicobacter pylori ATP-dependent protease, FtsH.</title>
        <authorList>
            <person name="Kim S.H."/>
            <person name="Kang G.B."/>
            <person name="Song H.E."/>
            <person name="Park S.J."/>
            <person name="Bea M.H."/>
            <person name="Eom S.H."/>
        </authorList>
    </citation>
    <scope>X-RAY CRYSTALLOGRAPHY (3.3 ANGSTROMS) OF 160-419 NUCLEOTIDE-FREE AND COMPLEXED WITH ADP</scope>
</reference>
<dbReference type="EC" id="3.4.24.-" evidence="1"/>
<dbReference type="EMBL" id="U59452">
    <property type="protein sequence ID" value="AAC44563.1"/>
    <property type="molecule type" value="Genomic_DNA"/>
</dbReference>
<dbReference type="EMBL" id="U97567">
    <property type="protein sequence ID" value="AAB66377.1"/>
    <property type="molecule type" value="Genomic_DNA"/>
</dbReference>
<dbReference type="EMBL" id="AE000511">
    <property type="protein sequence ID" value="AAD08115.1"/>
    <property type="molecule type" value="Genomic_DNA"/>
</dbReference>
<dbReference type="EMBL" id="U59625">
    <property type="protein sequence ID" value="AAB05472.1"/>
    <property type="molecule type" value="Genomic_DNA"/>
</dbReference>
<dbReference type="PIR" id="E64653">
    <property type="entry name" value="E64653"/>
</dbReference>
<dbReference type="RefSeq" id="NP_207860.1">
    <property type="nucleotide sequence ID" value="NC_000915.1"/>
</dbReference>
<dbReference type="RefSeq" id="WP_000805281.1">
    <property type="nucleotide sequence ID" value="NC_018939.1"/>
</dbReference>
<dbReference type="PDB" id="2R62">
    <property type="method" value="X-ray"/>
    <property type="resolution" value="3.30 A"/>
    <property type="chains" value="A/B=160-419"/>
</dbReference>
<dbReference type="PDB" id="2R65">
    <property type="method" value="X-ray"/>
    <property type="resolution" value="3.30 A"/>
    <property type="chains" value="A/B/C/D/E=160-419"/>
</dbReference>
<dbReference type="PDBsum" id="2R62"/>
<dbReference type="PDBsum" id="2R65"/>
<dbReference type="SMR" id="P71408"/>
<dbReference type="DIP" id="DIP-3549N"/>
<dbReference type="FunCoup" id="P71408">
    <property type="interactions" value="332"/>
</dbReference>
<dbReference type="IntAct" id="P71408">
    <property type="interactions" value="4"/>
</dbReference>
<dbReference type="MINT" id="P71408"/>
<dbReference type="STRING" id="85962.HP_1069"/>
<dbReference type="PaxDb" id="85962-C694_05525"/>
<dbReference type="EnsemblBacteria" id="AAD08115">
    <property type="protein sequence ID" value="AAD08115"/>
    <property type="gene ID" value="HP_1069"/>
</dbReference>
<dbReference type="KEGG" id="heo:C694_05525"/>
<dbReference type="KEGG" id="hpy:HP_1069"/>
<dbReference type="PATRIC" id="fig|85962.47.peg.1148"/>
<dbReference type="eggNOG" id="COG0465">
    <property type="taxonomic scope" value="Bacteria"/>
</dbReference>
<dbReference type="InParanoid" id="P71408"/>
<dbReference type="OrthoDB" id="9809379at2"/>
<dbReference type="PhylomeDB" id="P71408"/>
<dbReference type="EvolutionaryTrace" id="P71408"/>
<dbReference type="Proteomes" id="UP000000429">
    <property type="component" value="Chromosome"/>
</dbReference>
<dbReference type="GO" id="GO:0005886">
    <property type="term" value="C:plasma membrane"/>
    <property type="evidence" value="ECO:0007669"/>
    <property type="project" value="UniProtKB-SubCell"/>
</dbReference>
<dbReference type="GO" id="GO:0005524">
    <property type="term" value="F:ATP binding"/>
    <property type="evidence" value="ECO:0007669"/>
    <property type="project" value="UniProtKB-UniRule"/>
</dbReference>
<dbReference type="GO" id="GO:0016887">
    <property type="term" value="F:ATP hydrolysis activity"/>
    <property type="evidence" value="ECO:0007669"/>
    <property type="project" value="UniProtKB-UniRule"/>
</dbReference>
<dbReference type="GO" id="GO:0004176">
    <property type="term" value="F:ATP-dependent peptidase activity"/>
    <property type="evidence" value="ECO:0007669"/>
    <property type="project" value="InterPro"/>
</dbReference>
<dbReference type="GO" id="GO:0004222">
    <property type="term" value="F:metalloendopeptidase activity"/>
    <property type="evidence" value="ECO:0000318"/>
    <property type="project" value="GO_Central"/>
</dbReference>
<dbReference type="GO" id="GO:0008270">
    <property type="term" value="F:zinc ion binding"/>
    <property type="evidence" value="ECO:0007669"/>
    <property type="project" value="UniProtKB-UniRule"/>
</dbReference>
<dbReference type="GO" id="GO:0030163">
    <property type="term" value="P:protein catabolic process"/>
    <property type="evidence" value="ECO:0007669"/>
    <property type="project" value="UniProtKB-UniRule"/>
</dbReference>
<dbReference type="GO" id="GO:0006508">
    <property type="term" value="P:proteolysis"/>
    <property type="evidence" value="ECO:0007669"/>
    <property type="project" value="UniProtKB-KW"/>
</dbReference>
<dbReference type="CDD" id="cd19501">
    <property type="entry name" value="RecA-like_FtsH"/>
    <property type="match status" value="1"/>
</dbReference>
<dbReference type="FunFam" id="1.10.8.60:FF:000001">
    <property type="entry name" value="ATP-dependent zinc metalloprotease FtsH"/>
    <property type="match status" value="1"/>
</dbReference>
<dbReference type="FunFam" id="1.20.58.760:FF:000001">
    <property type="entry name" value="ATP-dependent zinc metalloprotease FtsH"/>
    <property type="match status" value="1"/>
</dbReference>
<dbReference type="FunFam" id="3.40.50.300:FF:000001">
    <property type="entry name" value="ATP-dependent zinc metalloprotease FtsH"/>
    <property type="match status" value="1"/>
</dbReference>
<dbReference type="Gene3D" id="1.10.8.60">
    <property type="match status" value="1"/>
</dbReference>
<dbReference type="Gene3D" id="3.30.720.210">
    <property type="match status" value="1"/>
</dbReference>
<dbReference type="Gene3D" id="3.40.50.300">
    <property type="entry name" value="P-loop containing nucleotide triphosphate hydrolases"/>
    <property type="match status" value="1"/>
</dbReference>
<dbReference type="Gene3D" id="1.20.58.760">
    <property type="entry name" value="Peptidase M41"/>
    <property type="match status" value="1"/>
</dbReference>
<dbReference type="HAMAP" id="MF_01458">
    <property type="entry name" value="FtsH"/>
    <property type="match status" value="1"/>
</dbReference>
<dbReference type="InterPro" id="IPR003593">
    <property type="entry name" value="AAA+_ATPase"/>
</dbReference>
<dbReference type="InterPro" id="IPR041569">
    <property type="entry name" value="AAA_lid_3"/>
</dbReference>
<dbReference type="InterPro" id="IPR050928">
    <property type="entry name" value="ATP-dep_Zn_Metalloprotease"/>
</dbReference>
<dbReference type="InterPro" id="IPR003959">
    <property type="entry name" value="ATPase_AAA_core"/>
</dbReference>
<dbReference type="InterPro" id="IPR003960">
    <property type="entry name" value="ATPase_AAA_CS"/>
</dbReference>
<dbReference type="InterPro" id="IPR005936">
    <property type="entry name" value="FtsH"/>
</dbReference>
<dbReference type="InterPro" id="IPR027417">
    <property type="entry name" value="P-loop_NTPase"/>
</dbReference>
<dbReference type="InterPro" id="IPR011546">
    <property type="entry name" value="Pept_M41_FtsH_extracell"/>
</dbReference>
<dbReference type="InterPro" id="IPR000642">
    <property type="entry name" value="Peptidase_M41"/>
</dbReference>
<dbReference type="InterPro" id="IPR037219">
    <property type="entry name" value="Peptidase_M41-like"/>
</dbReference>
<dbReference type="NCBIfam" id="TIGR01241">
    <property type="entry name" value="FtsH_fam"/>
    <property type="match status" value="1"/>
</dbReference>
<dbReference type="PANTHER" id="PTHR43655:SF2">
    <property type="entry name" value="AFG3 LIKE MATRIX AAA PEPTIDASE SUBUNIT 2, ISOFORM A"/>
    <property type="match status" value="1"/>
</dbReference>
<dbReference type="PANTHER" id="PTHR43655">
    <property type="entry name" value="ATP-DEPENDENT PROTEASE"/>
    <property type="match status" value="1"/>
</dbReference>
<dbReference type="Pfam" id="PF00004">
    <property type="entry name" value="AAA"/>
    <property type="match status" value="1"/>
</dbReference>
<dbReference type="Pfam" id="PF17862">
    <property type="entry name" value="AAA_lid_3"/>
    <property type="match status" value="1"/>
</dbReference>
<dbReference type="Pfam" id="PF06480">
    <property type="entry name" value="FtsH_ext"/>
    <property type="match status" value="1"/>
</dbReference>
<dbReference type="Pfam" id="PF01434">
    <property type="entry name" value="Peptidase_M41"/>
    <property type="match status" value="1"/>
</dbReference>
<dbReference type="SMART" id="SM00382">
    <property type="entry name" value="AAA"/>
    <property type="match status" value="1"/>
</dbReference>
<dbReference type="SUPFAM" id="SSF140990">
    <property type="entry name" value="FtsH protease domain-like"/>
    <property type="match status" value="1"/>
</dbReference>
<dbReference type="SUPFAM" id="SSF52540">
    <property type="entry name" value="P-loop containing nucleoside triphosphate hydrolases"/>
    <property type="match status" value="1"/>
</dbReference>
<dbReference type="PROSITE" id="PS00674">
    <property type="entry name" value="AAA"/>
    <property type="match status" value="1"/>
</dbReference>
<comment type="function">
    <text evidence="1">Acts as a processive, ATP-dependent zinc metallopeptidase for both cytoplasmic and membrane proteins. Plays a role in the quality control of integral membrane proteins.</text>
</comment>
<comment type="cofactor">
    <cofactor evidence="1">
        <name>Zn(2+)</name>
        <dbReference type="ChEBI" id="CHEBI:29105"/>
    </cofactor>
    <text evidence="1">Binds 1 zinc ion per subunit.</text>
</comment>
<comment type="subunit">
    <text evidence="1">Homohexamer.</text>
</comment>
<comment type="subcellular location">
    <subcellularLocation>
        <location evidence="4">Cell inner membrane</location>
        <topology evidence="4">Multi-pass membrane protein</topology>
        <orientation evidence="4">Cytoplasmic side</orientation>
    </subcellularLocation>
</comment>
<comment type="disruption phenotype">
    <text evidence="2">A homozygous disruption strain was not identified, suggesting this gene may be essential.</text>
</comment>
<comment type="similarity">
    <text evidence="1">In the central section; belongs to the AAA ATPase family.</text>
</comment>
<comment type="similarity">
    <text evidence="1">In the C-terminal section; belongs to the peptidase M41 family.</text>
</comment>
<protein>
    <recommendedName>
        <fullName evidence="1">ATP-dependent zinc metalloprotease FtsH</fullName>
        <ecNumber evidence="1">3.4.24.-</ecNumber>
    </recommendedName>
</protein>
<sequence>MKPTNEPKKPFFQSPIILAVLGGILLIFFLRSFNSDGSFSDNFLASSTKNVSYHEIKQLISNNEVENVSIGQTLIKASHKEGNNRVIYIAKRVPDLTLVPLLDEKKINYSGFSESNFFTDMLGWLMPILVILGLWMFMANRMQKNMGGGIFGMGSAKKLINAEKPNVRFNDMAGNEEAKEEVVEIVDFLKYPERYANLGAKIPKGVLLVGPPGTGKTLLAKAVAGEAHVPFFSMGGSSFIEMFVGLGASRVRDLFETAKKQAPSIIFIDEIDAIGKSRAAGGVVSGNDEREQTLNQLLAEMDGFGSENAPVIVLAATNRPEILDPALMRPGRFDRQVLVDKPDFNGRVEILKVHIKGVKLANDVNLQEVAKLTAGLAGADLANIINEAALLAGRNNQKEVRQQHLKEAVERGIAGLEKKSRRISPKEKKIVAYHESGHAVISEMTKGSARVNKVSIIPRGMAALGYTLNTPEENKYLMQKHELIAEIDVLLGGRAAEDVFLEEISTGASNDLERATDIIKGMVSYYGMSSVSGLMVLEKQRNAFLGGGYGSSREFSEKTAEEMDLFIKNLLEERYKHVKQTLSDYREAIEIMVKELFDKEVITGERVREIISEYEVANNLESRLIPLEEQAS</sequence>
<organism>
    <name type="scientific">Helicobacter pylori (strain ATCC 700392 / 26695)</name>
    <name type="common">Campylobacter pylori</name>
    <dbReference type="NCBI Taxonomy" id="85962"/>
    <lineage>
        <taxon>Bacteria</taxon>
        <taxon>Pseudomonadati</taxon>
        <taxon>Campylobacterota</taxon>
        <taxon>Epsilonproteobacteria</taxon>
        <taxon>Campylobacterales</taxon>
        <taxon>Helicobacteraceae</taxon>
        <taxon>Helicobacter</taxon>
    </lineage>
</organism>
<feature type="chain" id="PRO_0000084636" description="ATP-dependent zinc metalloprotease FtsH">
    <location>
        <begin position="1"/>
        <end position="632"/>
    </location>
</feature>
<feature type="topological domain" description="Cytoplasmic" evidence="1">
    <location>
        <begin position="1"/>
        <end position="9"/>
    </location>
</feature>
<feature type="transmembrane region" description="Helical" evidence="1">
    <location>
        <begin position="10"/>
        <end position="30"/>
    </location>
</feature>
<feature type="topological domain" description="Periplasmic" evidence="1">
    <location>
        <begin position="31"/>
        <end position="116"/>
    </location>
</feature>
<feature type="transmembrane region" description="Helical" evidence="1">
    <location>
        <begin position="117"/>
        <end position="137"/>
    </location>
</feature>
<feature type="topological domain" description="Cytoplasmic" evidence="3">
    <location>
        <begin position="138"/>
        <end position="632"/>
    </location>
</feature>
<feature type="active site" evidence="1">
    <location>
        <position position="435"/>
    </location>
</feature>
<feature type="binding site">
    <location>
        <position position="173"/>
    </location>
    <ligand>
        <name>ATP</name>
        <dbReference type="ChEBI" id="CHEBI:30616"/>
    </ligand>
</feature>
<feature type="binding site">
    <location>
        <begin position="213"/>
        <end position="217"/>
    </location>
    <ligand>
        <name>ATP</name>
        <dbReference type="ChEBI" id="CHEBI:30616"/>
    </ligand>
</feature>
<feature type="binding site">
    <location>
        <position position="354"/>
    </location>
    <ligand>
        <name>ATP</name>
        <dbReference type="ChEBI" id="CHEBI:30616"/>
    </ligand>
</feature>
<feature type="binding site" evidence="1">
    <location>
        <position position="434"/>
    </location>
    <ligand>
        <name>Zn(2+)</name>
        <dbReference type="ChEBI" id="CHEBI:29105"/>
        <note>catalytic</note>
    </ligand>
</feature>
<feature type="binding site" evidence="1">
    <location>
        <position position="438"/>
    </location>
    <ligand>
        <name>Zn(2+)</name>
        <dbReference type="ChEBI" id="CHEBI:29105"/>
        <note>catalytic</note>
    </ligand>
</feature>
<feature type="binding site" evidence="1">
    <location>
        <position position="511"/>
    </location>
    <ligand>
        <name>Zn(2+)</name>
        <dbReference type="ChEBI" id="CHEBI:29105"/>
        <note>catalytic</note>
    </ligand>
</feature>
<feature type="sequence conflict" description="In Ref. 1; AAC44563." evidence="3" ref="1">
    <original>G</original>
    <variation>P</variation>
    <location>
        <position position="275"/>
    </location>
</feature>
<feature type="sequence conflict" description="In Ref. 1; AAC44563." evidence="3" ref="1">
    <original>VV</original>
    <variation>MI</variation>
    <location>
        <begin position="283"/>
        <end position="284"/>
    </location>
</feature>
<feature type="sequence conflict" description="In Ref. 2; AAB66377." evidence="3" ref="2">
    <original>L</original>
    <variation>F</variation>
    <location>
        <position position="297"/>
    </location>
</feature>
<feature type="sequence conflict" description="In Ref. 1; AAC44563." evidence="3" ref="1">
    <original>H</original>
    <variation>D</variation>
    <location>
        <position position="354"/>
    </location>
</feature>
<feature type="sequence conflict" description="In Ref. 1; AAC44563." evidence="3" ref="1">
    <original>LQ</original>
    <variation>FE</variation>
    <location>
        <begin position="366"/>
        <end position="367"/>
    </location>
</feature>
<feature type="sequence conflict" description="In Ref. 2; AAB66377." evidence="3" ref="2">
    <original>RQ</original>
    <variation>KL</variation>
    <location>
        <begin position="401"/>
        <end position="402"/>
    </location>
</feature>
<feature type="sequence conflict" description="In Ref. 1; AAC44563." evidence="3" ref="1">
    <original>R</original>
    <variation>K</variation>
    <location>
        <position position="401"/>
    </location>
</feature>
<feature type="sequence conflict" description="In Ref. 2; AAB66377." evidence="3" ref="2">
    <original>I</original>
    <variation>M</variation>
    <location>
        <position position="430"/>
    </location>
</feature>
<feature type="sequence conflict" description="In Ref. 2; AAB66377." evidence="3" ref="2">
    <original>A</original>
    <variation>G</variation>
    <location>
        <position position="449"/>
    </location>
</feature>
<feature type="sequence conflict" description="In Ref. 2; AAB66377." evidence="3" ref="2">
    <original>S</original>
    <variation>Y</variation>
    <location>
        <position position="455"/>
    </location>
</feature>
<feature type="sequence conflict" description="In Ref. 2; AAB66377." evidence="3" ref="2">
    <original>V</original>
    <variation>F</variation>
    <location>
        <position position="499"/>
    </location>
</feature>
<feature type="sequence conflict" description="In Ref. 1; AAC44563 and 4; AAB05472." evidence="3" ref="1 4">
    <original>K</original>
    <variation>E</variation>
    <location>
        <position position="576"/>
    </location>
</feature>
<feature type="sequence conflict" description="In Ref. 1; AAC44563." evidence="3" ref="1">
    <original>V</original>
    <variation>A</variation>
    <location>
        <position position="616"/>
    </location>
</feature>
<feature type="helix" evidence="6">
    <location>
        <begin position="169"/>
        <end position="171"/>
    </location>
</feature>
<feature type="strand" evidence="5">
    <location>
        <begin position="172"/>
        <end position="174"/>
    </location>
</feature>
<feature type="turn" evidence="5">
    <location>
        <begin position="176"/>
        <end position="178"/>
    </location>
</feature>
<feature type="helix" evidence="5">
    <location>
        <begin position="179"/>
        <end position="190"/>
    </location>
</feature>
<feature type="helix" evidence="5">
    <location>
        <begin position="192"/>
        <end position="198"/>
    </location>
</feature>
<feature type="strand" evidence="6">
    <location>
        <begin position="206"/>
        <end position="209"/>
    </location>
</feature>
<feature type="strand" evidence="6">
    <location>
        <begin position="211"/>
        <end position="215"/>
    </location>
</feature>
<feature type="helix" evidence="5">
    <location>
        <begin position="216"/>
        <end position="224"/>
    </location>
</feature>
<feature type="turn" evidence="5">
    <location>
        <begin position="225"/>
        <end position="228"/>
    </location>
</feature>
<feature type="strand" evidence="6">
    <location>
        <begin position="231"/>
        <end position="234"/>
    </location>
</feature>
<feature type="turn" evidence="5">
    <location>
        <begin position="238"/>
        <end position="241"/>
    </location>
</feature>
<feature type="strand" evidence="5">
    <location>
        <begin position="244"/>
        <end position="246"/>
    </location>
</feature>
<feature type="strand" evidence="5">
    <location>
        <begin position="248"/>
        <end position="252"/>
    </location>
</feature>
<feature type="helix" evidence="5">
    <location>
        <begin position="255"/>
        <end position="260"/>
    </location>
</feature>
<feature type="strand" evidence="5">
    <location>
        <begin position="265"/>
        <end position="269"/>
    </location>
</feature>
<feature type="helix" evidence="5">
    <location>
        <begin position="271"/>
        <end position="273"/>
    </location>
</feature>
<feature type="turn" evidence="6">
    <location>
        <begin position="291"/>
        <end position="293"/>
    </location>
</feature>
<feature type="turn" evidence="5">
    <location>
        <begin position="294"/>
        <end position="302"/>
    </location>
</feature>
<feature type="strand" evidence="6">
    <location>
        <begin position="307"/>
        <end position="309"/>
    </location>
</feature>
<feature type="strand" evidence="5">
    <location>
        <begin position="312"/>
        <end position="315"/>
    </location>
</feature>
<feature type="helix" evidence="5">
    <location>
        <begin position="325"/>
        <end position="328"/>
    </location>
</feature>
<feature type="strand" evidence="5">
    <location>
        <begin position="329"/>
        <end position="333"/>
    </location>
</feature>
<feature type="strand" evidence="6">
    <location>
        <begin position="335"/>
        <end position="338"/>
    </location>
</feature>
<feature type="turn" evidence="5">
    <location>
        <begin position="344"/>
        <end position="346"/>
    </location>
</feature>
<feature type="helix" evidence="5">
    <location>
        <begin position="347"/>
        <end position="354"/>
    </location>
</feature>
<feature type="strand" evidence="5">
    <location>
        <begin position="356"/>
        <end position="358"/>
    </location>
</feature>
<feature type="turn" evidence="5">
    <location>
        <begin position="366"/>
        <end position="370"/>
    </location>
</feature>
<feature type="strand" evidence="5">
    <location>
        <begin position="371"/>
        <end position="373"/>
    </location>
</feature>
<feature type="helix" evidence="5">
    <location>
        <begin position="378"/>
        <end position="390"/>
    </location>
</feature>
<feature type="strand" evidence="5">
    <location>
        <begin position="393"/>
        <end position="395"/>
    </location>
</feature>
<feature type="helix" evidence="5">
    <location>
        <begin position="402"/>
        <end position="406"/>
    </location>
</feature>
<feature type="strand" evidence="6">
    <location>
        <begin position="408"/>
        <end position="411"/>
    </location>
</feature>
<proteinExistence type="evidence at protein level"/>